<comment type="subcellular location">
    <subcellularLocation>
        <location evidence="1">Secreted</location>
        <location evidence="1">Cell wall</location>
    </subcellularLocation>
</comment>
<organism>
    <name type="scientific">Nicotiana tabacum</name>
    <name type="common">Common tobacco</name>
    <dbReference type="NCBI Taxonomy" id="4097"/>
    <lineage>
        <taxon>Eukaryota</taxon>
        <taxon>Viridiplantae</taxon>
        <taxon>Streptophyta</taxon>
        <taxon>Embryophyta</taxon>
        <taxon>Tracheophyta</taxon>
        <taxon>Spermatophyta</taxon>
        <taxon>Magnoliopsida</taxon>
        <taxon>eudicotyledons</taxon>
        <taxon>Gunneridae</taxon>
        <taxon>Pentapetalae</taxon>
        <taxon>asterids</taxon>
        <taxon>lamiids</taxon>
        <taxon>Solanales</taxon>
        <taxon>Solanaceae</taxon>
        <taxon>Nicotianoideae</taxon>
        <taxon>Nicotianeae</taxon>
        <taxon>Nicotiana</taxon>
    </lineage>
</organism>
<evidence type="ECO:0000269" key="1">
    <source>
    </source>
</evidence>
<evidence type="ECO:0000303" key="2">
    <source>
    </source>
</evidence>
<evidence type="ECO:0000305" key="3"/>
<feature type="chain" id="PRO_0000079689" description="14 kDa cell wall protein">
    <location>
        <begin position="1"/>
        <end position="11" status="greater than"/>
    </location>
</feature>
<feature type="non-terminal residue" evidence="2">
    <location>
        <position position="11"/>
    </location>
</feature>
<keyword id="KW-0134">Cell wall</keyword>
<keyword id="KW-0903">Direct protein sequencing</keyword>
<keyword id="KW-1185">Reference proteome</keyword>
<keyword id="KW-0964">Secreted</keyword>
<protein>
    <recommendedName>
        <fullName>14 kDa cell wall protein</fullName>
    </recommendedName>
</protein>
<accession>P80796</accession>
<sequence length="11" mass="1239">AVFVILTNVYT</sequence>
<proteinExistence type="evidence at protein level"/>
<reference evidence="3" key="1">
    <citation type="journal article" date="1997" name="J. Biol. Chem.">
        <title>Differential extraction and protein sequencing reveals major differences in patterns of primary cell wall proteins from plants.</title>
        <authorList>
            <person name="Robertson D."/>
            <person name="Mitchell G.P."/>
            <person name="Gilroy J.S."/>
            <person name="Gerrish C."/>
            <person name="Bolwell G.P."/>
            <person name="Slabas A.R."/>
        </authorList>
    </citation>
    <scope>PROTEIN SEQUENCE</scope>
    <scope>SUBCELLULAR LOCATION</scope>
</reference>
<dbReference type="PaxDb" id="4097-P80796"/>
<dbReference type="Proteomes" id="UP000084051">
    <property type="component" value="Unplaced"/>
</dbReference>
<dbReference type="GO" id="GO:0005576">
    <property type="term" value="C:extracellular region"/>
    <property type="evidence" value="ECO:0007669"/>
    <property type="project" value="UniProtKB-KW"/>
</dbReference>
<name>CWP19_TOBAC</name>